<protein>
    <recommendedName>
        <fullName evidence="1">Recombination protein RecR</fullName>
    </recommendedName>
</protein>
<name>RECR_GLUOX</name>
<reference key="1">
    <citation type="journal article" date="2005" name="Nat. Biotechnol.">
        <title>Complete genome sequence of the acetic acid bacterium Gluconobacter oxydans.</title>
        <authorList>
            <person name="Prust C."/>
            <person name="Hoffmeister M."/>
            <person name="Liesegang H."/>
            <person name="Wiezer A."/>
            <person name="Fricke W.F."/>
            <person name="Ehrenreich A."/>
            <person name="Gottschalk G."/>
            <person name="Deppenmeier U."/>
        </authorList>
    </citation>
    <scope>NUCLEOTIDE SEQUENCE [LARGE SCALE GENOMIC DNA]</scope>
    <source>
        <strain>621H</strain>
    </source>
</reference>
<feature type="chain" id="PRO_0000190326" description="Recombination protein RecR">
    <location>
        <begin position="1"/>
        <end position="198"/>
    </location>
</feature>
<feature type="domain" description="Toprim" evidence="1">
    <location>
        <begin position="80"/>
        <end position="175"/>
    </location>
</feature>
<feature type="zinc finger region" description="C4-type" evidence="1">
    <location>
        <begin position="57"/>
        <end position="72"/>
    </location>
</feature>
<organism>
    <name type="scientific">Gluconobacter oxydans (strain 621H)</name>
    <name type="common">Gluconobacter suboxydans</name>
    <dbReference type="NCBI Taxonomy" id="290633"/>
    <lineage>
        <taxon>Bacteria</taxon>
        <taxon>Pseudomonadati</taxon>
        <taxon>Pseudomonadota</taxon>
        <taxon>Alphaproteobacteria</taxon>
        <taxon>Acetobacterales</taxon>
        <taxon>Acetobacteraceae</taxon>
        <taxon>Gluconobacter</taxon>
    </lineage>
</organism>
<proteinExistence type="inferred from homology"/>
<sequence length="198" mass="20996">MMGHGDIDQLITMLARLPGLGPRSARRAALALLRQPESRMLPLAHLMERAATRVKTCSLCGNLDTVDPCHICTDAGRDRGLICVVETVGDLWALERAGVHRGVYQVLGGTLSALAGLGPDDLNVRPLFERIEEGGVREVILALSATVEGATTAHWLQERLLPTGVTVTRVGHGVPMGGALDVLDDGTLAAALTARRSL</sequence>
<keyword id="KW-0227">DNA damage</keyword>
<keyword id="KW-0233">DNA recombination</keyword>
<keyword id="KW-0234">DNA repair</keyword>
<keyword id="KW-0479">Metal-binding</keyword>
<keyword id="KW-1185">Reference proteome</keyword>
<keyword id="KW-0862">Zinc</keyword>
<keyword id="KW-0863">Zinc-finger</keyword>
<dbReference type="EMBL" id="CP000009">
    <property type="protein sequence ID" value="AAW60380.1"/>
    <property type="molecule type" value="Genomic_DNA"/>
</dbReference>
<dbReference type="RefSeq" id="WP_011252179.1">
    <property type="nucleotide sequence ID" value="NC_006677.1"/>
</dbReference>
<dbReference type="SMR" id="Q5FTB6"/>
<dbReference type="STRING" id="290633.GOX0602"/>
<dbReference type="KEGG" id="gox:GOX0602"/>
<dbReference type="eggNOG" id="COG0353">
    <property type="taxonomic scope" value="Bacteria"/>
</dbReference>
<dbReference type="HOGENOM" id="CLU_060739_1_1_5"/>
<dbReference type="Proteomes" id="UP000006375">
    <property type="component" value="Chromosome"/>
</dbReference>
<dbReference type="GO" id="GO:0003677">
    <property type="term" value="F:DNA binding"/>
    <property type="evidence" value="ECO:0007669"/>
    <property type="project" value="UniProtKB-UniRule"/>
</dbReference>
<dbReference type="GO" id="GO:0008270">
    <property type="term" value="F:zinc ion binding"/>
    <property type="evidence" value="ECO:0007669"/>
    <property type="project" value="UniProtKB-KW"/>
</dbReference>
<dbReference type="GO" id="GO:0006310">
    <property type="term" value="P:DNA recombination"/>
    <property type="evidence" value="ECO:0007669"/>
    <property type="project" value="UniProtKB-UniRule"/>
</dbReference>
<dbReference type="GO" id="GO:0006281">
    <property type="term" value="P:DNA repair"/>
    <property type="evidence" value="ECO:0007669"/>
    <property type="project" value="UniProtKB-UniRule"/>
</dbReference>
<dbReference type="CDD" id="cd01025">
    <property type="entry name" value="TOPRIM_recR"/>
    <property type="match status" value="1"/>
</dbReference>
<dbReference type="Gene3D" id="3.40.1360.10">
    <property type="match status" value="1"/>
</dbReference>
<dbReference type="Gene3D" id="6.10.250.240">
    <property type="match status" value="1"/>
</dbReference>
<dbReference type="Gene3D" id="1.10.8.420">
    <property type="entry name" value="RecR Domain 1"/>
    <property type="match status" value="1"/>
</dbReference>
<dbReference type="HAMAP" id="MF_00017">
    <property type="entry name" value="RecR"/>
    <property type="match status" value="1"/>
</dbReference>
<dbReference type="InterPro" id="IPR000093">
    <property type="entry name" value="DNA_Rcmb_RecR"/>
</dbReference>
<dbReference type="InterPro" id="IPR023627">
    <property type="entry name" value="Rcmb_RecR"/>
</dbReference>
<dbReference type="InterPro" id="IPR015967">
    <property type="entry name" value="Rcmb_RecR_Znf"/>
</dbReference>
<dbReference type="InterPro" id="IPR006171">
    <property type="entry name" value="TOPRIM_dom"/>
</dbReference>
<dbReference type="InterPro" id="IPR034137">
    <property type="entry name" value="TOPRIM_RecR"/>
</dbReference>
<dbReference type="NCBIfam" id="TIGR00615">
    <property type="entry name" value="recR"/>
    <property type="match status" value="1"/>
</dbReference>
<dbReference type="PANTHER" id="PTHR30446">
    <property type="entry name" value="RECOMBINATION PROTEIN RECR"/>
    <property type="match status" value="1"/>
</dbReference>
<dbReference type="PANTHER" id="PTHR30446:SF0">
    <property type="entry name" value="RECOMBINATION PROTEIN RECR"/>
    <property type="match status" value="1"/>
</dbReference>
<dbReference type="Pfam" id="PF21175">
    <property type="entry name" value="RecR_C"/>
    <property type="match status" value="1"/>
</dbReference>
<dbReference type="Pfam" id="PF21176">
    <property type="entry name" value="RecR_HhH"/>
    <property type="match status" value="1"/>
</dbReference>
<dbReference type="Pfam" id="PF02132">
    <property type="entry name" value="RecR_ZnF"/>
    <property type="match status" value="1"/>
</dbReference>
<dbReference type="Pfam" id="PF13662">
    <property type="entry name" value="Toprim_4"/>
    <property type="match status" value="1"/>
</dbReference>
<dbReference type="SMART" id="SM00493">
    <property type="entry name" value="TOPRIM"/>
    <property type="match status" value="1"/>
</dbReference>
<dbReference type="SUPFAM" id="SSF111304">
    <property type="entry name" value="Recombination protein RecR"/>
    <property type="match status" value="1"/>
</dbReference>
<dbReference type="PROSITE" id="PS01300">
    <property type="entry name" value="RECR"/>
    <property type="match status" value="1"/>
</dbReference>
<dbReference type="PROSITE" id="PS50880">
    <property type="entry name" value="TOPRIM"/>
    <property type="match status" value="1"/>
</dbReference>
<gene>
    <name evidence="1" type="primary">recR</name>
    <name type="ordered locus">GOX0602</name>
</gene>
<evidence type="ECO:0000255" key="1">
    <source>
        <dbReference type="HAMAP-Rule" id="MF_00017"/>
    </source>
</evidence>
<comment type="function">
    <text evidence="1">May play a role in DNA repair. It seems to be involved in an RecBC-independent recombinational process of DNA repair. It may act with RecF and RecO.</text>
</comment>
<comment type="similarity">
    <text evidence="1">Belongs to the RecR family.</text>
</comment>
<accession>Q5FTB6</accession>